<comment type="function">
    <text evidence="1">NDH shuttles electrons from NAD(P)H:plastoquinone, via FMN and iron-sulfur (Fe-S) centers, to quinones in the photosynthetic chain and possibly in a chloroplast respiratory chain. The immediate electron acceptor for the enzyme in this species is believed to be plastoquinone. Couples the redox reaction to proton translocation, and thus conserves the redox energy in a proton gradient.</text>
</comment>
<comment type="catalytic activity">
    <reaction evidence="1">
        <text>a plastoquinone + NADH + (n+1) H(+)(in) = a plastoquinol + NAD(+) + n H(+)(out)</text>
        <dbReference type="Rhea" id="RHEA:42608"/>
        <dbReference type="Rhea" id="RHEA-COMP:9561"/>
        <dbReference type="Rhea" id="RHEA-COMP:9562"/>
        <dbReference type="ChEBI" id="CHEBI:15378"/>
        <dbReference type="ChEBI" id="CHEBI:17757"/>
        <dbReference type="ChEBI" id="CHEBI:57540"/>
        <dbReference type="ChEBI" id="CHEBI:57945"/>
        <dbReference type="ChEBI" id="CHEBI:62192"/>
    </reaction>
</comment>
<comment type="catalytic activity">
    <reaction evidence="1">
        <text>a plastoquinone + NADPH + (n+1) H(+)(in) = a plastoquinol + NADP(+) + n H(+)(out)</text>
        <dbReference type="Rhea" id="RHEA:42612"/>
        <dbReference type="Rhea" id="RHEA-COMP:9561"/>
        <dbReference type="Rhea" id="RHEA-COMP:9562"/>
        <dbReference type="ChEBI" id="CHEBI:15378"/>
        <dbReference type="ChEBI" id="CHEBI:17757"/>
        <dbReference type="ChEBI" id="CHEBI:57783"/>
        <dbReference type="ChEBI" id="CHEBI:58349"/>
        <dbReference type="ChEBI" id="CHEBI:62192"/>
    </reaction>
</comment>
<comment type="subunit">
    <text evidence="1">NDH is composed of at least 16 different subunits, 5 of which are encoded in the nucleus.</text>
</comment>
<comment type="subcellular location">
    <subcellularLocation>
        <location evidence="1">Plastid</location>
        <location evidence="1">Chloroplast thylakoid membrane</location>
        <topology evidence="1">Multi-pass membrane protein</topology>
    </subcellularLocation>
</comment>
<comment type="similarity">
    <text evidence="1">Belongs to the complex I subunit 1 family.</text>
</comment>
<protein>
    <recommendedName>
        <fullName evidence="1">NAD(P)H-quinone oxidoreductase subunit 1, chloroplastic</fullName>
        <ecNumber evidence="1">7.1.1.-</ecNumber>
    </recommendedName>
    <alternativeName>
        <fullName evidence="1">NAD(P)H dehydrogenase subunit 1</fullName>
        <shortName evidence="1">NDH subunit 1</shortName>
    </alternativeName>
    <alternativeName>
        <fullName evidence="1">NADH-plastoquinone oxidoreductase subunit 1</fullName>
    </alternativeName>
</protein>
<proteinExistence type="inferred from homology"/>
<name>NU1C_NASOF</name>
<gene>
    <name evidence="1" type="primary">ndhA</name>
</gene>
<dbReference type="EC" id="7.1.1.-" evidence="1"/>
<dbReference type="EMBL" id="AP009376">
    <property type="protein sequence ID" value="BAF50695.1"/>
    <property type="molecule type" value="Genomic_DNA"/>
</dbReference>
<dbReference type="RefSeq" id="YP_001123870.1">
    <property type="nucleotide sequence ID" value="NC_009275.1"/>
</dbReference>
<dbReference type="SMR" id="A4QLZ0"/>
<dbReference type="GeneID" id="4962108"/>
<dbReference type="GO" id="GO:0009535">
    <property type="term" value="C:chloroplast thylakoid membrane"/>
    <property type="evidence" value="ECO:0007669"/>
    <property type="project" value="UniProtKB-SubCell"/>
</dbReference>
<dbReference type="GO" id="GO:0003954">
    <property type="term" value="F:NADH dehydrogenase activity"/>
    <property type="evidence" value="ECO:0007669"/>
    <property type="project" value="TreeGrafter"/>
</dbReference>
<dbReference type="GO" id="GO:0016655">
    <property type="term" value="F:oxidoreductase activity, acting on NAD(P)H, quinone or similar compound as acceptor"/>
    <property type="evidence" value="ECO:0007669"/>
    <property type="project" value="UniProtKB-UniRule"/>
</dbReference>
<dbReference type="GO" id="GO:0048038">
    <property type="term" value="F:quinone binding"/>
    <property type="evidence" value="ECO:0007669"/>
    <property type="project" value="UniProtKB-KW"/>
</dbReference>
<dbReference type="GO" id="GO:0009060">
    <property type="term" value="P:aerobic respiration"/>
    <property type="evidence" value="ECO:0007669"/>
    <property type="project" value="TreeGrafter"/>
</dbReference>
<dbReference type="GO" id="GO:0019684">
    <property type="term" value="P:photosynthesis, light reaction"/>
    <property type="evidence" value="ECO:0007669"/>
    <property type="project" value="UniProtKB-UniRule"/>
</dbReference>
<dbReference type="HAMAP" id="MF_01350">
    <property type="entry name" value="NDH1_NuoH"/>
    <property type="match status" value="1"/>
</dbReference>
<dbReference type="InterPro" id="IPR001694">
    <property type="entry name" value="NADH_UbQ_OxRdtase_su1/FPO"/>
</dbReference>
<dbReference type="InterPro" id="IPR018086">
    <property type="entry name" value="NADH_UbQ_OxRdtase_su1_CS"/>
</dbReference>
<dbReference type="NCBIfam" id="NF004741">
    <property type="entry name" value="PRK06076.1-2"/>
    <property type="match status" value="1"/>
</dbReference>
<dbReference type="PANTHER" id="PTHR11432">
    <property type="entry name" value="NADH DEHYDROGENASE SUBUNIT 1"/>
    <property type="match status" value="1"/>
</dbReference>
<dbReference type="PANTHER" id="PTHR11432:SF3">
    <property type="entry name" value="NADH-UBIQUINONE OXIDOREDUCTASE CHAIN 1"/>
    <property type="match status" value="1"/>
</dbReference>
<dbReference type="Pfam" id="PF00146">
    <property type="entry name" value="NADHdh"/>
    <property type="match status" value="1"/>
</dbReference>
<dbReference type="PROSITE" id="PS00667">
    <property type="entry name" value="COMPLEX1_ND1_1"/>
    <property type="match status" value="1"/>
</dbReference>
<dbReference type="PROSITE" id="PS00668">
    <property type="entry name" value="COMPLEX1_ND1_2"/>
    <property type="match status" value="1"/>
</dbReference>
<organism>
    <name type="scientific">Nasturtium officinale</name>
    <name type="common">Watercress</name>
    <name type="synonym">Rorippa nasturtium-aquaticum</name>
    <dbReference type="NCBI Taxonomy" id="65948"/>
    <lineage>
        <taxon>Eukaryota</taxon>
        <taxon>Viridiplantae</taxon>
        <taxon>Streptophyta</taxon>
        <taxon>Embryophyta</taxon>
        <taxon>Tracheophyta</taxon>
        <taxon>Spermatophyta</taxon>
        <taxon>Magnoliopsida</taxon>
        <taxon>eudicotyledons</taxon>
        <taxon>Gunneridae</taxon>
        <taxon>Pentapetalae</taxon>
        <taxon>rosids</taxon>
        <taxon>malvids</taxon>
        <taxon>Brassicales</taxon>
        <taxon>Brassicaceae</taxon>
        <taxon>Cardamineae</taxon>
        <taxon>Nasturtium</taxon>
    </lineage>
</organism>
<reference key="1">
    <citation type="submission" date="2007-03" db="EMBL/GenBank/DDBJ databases">
        <title>Sequencing analysis of Nasturtium officinale chloroplast DNA.</title>
        <authorList>
            <person name="Hosouchi T."/>
            <person name="Tsuruoka H."/>
            <person name="Kotani H."/>
        </authorList>
    </citation>
    <scope>NUCLEOTIDE SEQUENCE [LARGE SCALE GENOMIC DNA]</scope>
</reference>
<keyword id="KW-0150">Chloroplast</keyword>
<keyword id="KW-0472">Membrane</keyword>
<keyword id="KW-0520">NAD</keyword>
<keyword id="KW-0521">NADP</keyword>
<keyword id="KW-0934">Plastid</keyword>
<keyword id="KW-0618">Plastoquinone</keyword>
<keyword id="KW-0874">Quinone</keyword>
<keyword id="KW-0793">Thylakoid</keyword>
<keyword id="KW-1278">Translocase</keyword>
<keyword id="KW-0812">Transmembrane</keyword>
<keyword id="KW-1133">Transmembrane helix</keyword>
<sequence length="360" mass="40059">MIIYATAVQTINSFVRLESLKEVYGLIWIFVPIFSLVLGIITGVLVIVWLEREISAGIQQRIGPEYAGPLGILQALADGTKLLFKENLRPSRGNPPLFSIGPSIAVISILLSYSVIPFSNHLVLADLNIGIFLWIAISSIAPIGLLMSGYGSNNKYSFLGGLRAAAQSISYEIPLTLCVLSISLLSNSLSTVDIVEAQSKYGFWGWNLWRQPIGFIIFLISSLAECERLPFDLPEAEEELIAGYQTEYSGIKFGLFYVASYLNLLISSLFVTVLYLGGWNISIPYISILELFQRDQIFGTTIGIFITLAKTYLFLFISIATRWTLPRLRMDQLLNLGWKFLLPISLGNLLLTTSFQLFSL</sequence>
<geneLocation type="chloroplast"/>
<accession>A4QLZ0</accession>
<evidence type="ECO:0000255" key="1">
    <source>
        <dbReference type="HAMAP-Rule" id="MF_01350"/>
    </source>
</evidence>
<feature type="chain" id="PRO_0000298875" description="NAD(P)H-quinone oxidoreductase subunit 1, chloroplastic">
    <location>
        <begin position="1"/>
        <end position="360"/>
    </location>
</feature>
<feature type="transmembrane region" description="Helical" evidence="1">
    <location>
        <begin position="27"/>
        <end position="47"/>
    </location>
</feature>
<feature type="transmembrane region" description="Helical" evidence="1">
    <location>
        <begin position="98"/>
        <end position="118"/>
    </location>
</feature>
<feature type="transmembrane region" description="Helical" evidence="1">
    <location>
        <begin position="129"/>
        <end position="149"/>
    </location>
</feature>
<feature type="transmembrane region" description="Helical" evidence="1">
    <location>
        <begin position="165"/>
        <end position="185"/>
    </location>
</feature>
<feature type="transmembrane region" description="Helical" evidence="1">
    <location>
        <begin position="203"/>
        <end position="223"/>
    </location>
</feature>
<feature type="transmembrane region" description="Helical" evidence="1">
    <location>
        <begin position="248"/>
        <end position="268"/>
    </location>
</feature>
<feature type="transmembrane region" description="Helical" evidence="1">
    <location>
        <begin position="269"/>
        <end position="289"/>
    </location>
</feature>
<feature type="transmembrane region" description="Helical" evidence="1">
    <location>
        <begin position="297"/>
        <end position="317"/>
    </location>
</feature>
<feature type="transmembrane region" description="Helical" evidence="1">
    <location>
        <begin position="340"/>
        <end position="360"/>
    </location>
</feature>